<proteinExistence type="evidence at protein level"/>
<dbReference type="EMBL" id="CP017625">
    <property type="protein sequence ID" value="AOW28525.1"/>
    <property type="molecule type" value="Genomic_DNA"/>
</dbReference>
<dbReference type="RefSeq" id="XP_019330871.1">
    <property type="nucleotide sequence ID" value="XM_019475326.1"/>
</dbReference>
<dbReference type="PDB" id="7PZY">
    <property type="method" value="EM"/>
    <property type="resolution" value="2.32 A"/>
    <property type="chains" value="y=1-186"/>
</dbReference>
<dbReference type="PDB" id="7Q08">
    <property type="method" value="EM"/>
    <property type="resolution" value="2.56 A"/>
    <property type="chains" value="y=1-186"/>
</dbReference>
<dbReference type="PDB" id="7Q0F">
    <property type="method" value="EM"/>
    <property type="resolution" value="2.64 A"/>
    <property type="chains" value="y=1-186"/>
</dbReference>
<dbReference type="PDB" id="7Q0P">
    <property type="method" value="EM"/>
    <property type="resolution" value="2.77 A"/>
    <property type="chains" value="y=1-186"/>
</dbReference>
<dbReference type="PDB" id="7Q0R">
    <property type="method" value="EM"/>
    <property type="resolution" value="2.67 A"/>
    <property type="chains" value="y=1-186"/>
</dbReference>
<dbReference type="PDB" id="8C3A">
    <property type="method" value="X-ray"/>
    <property type="resolution" value="3.00 A"/>
    <property type="chains" value="BL/y=1-186"/>
</dbReference>
<dbReference type="PDB" id="8OGJ">
    <property type="method" value="EM"/>
    <property type="resolution" value="3.10 A"/>
    <property type="chains" value="y=1-186"/>
</dbReference>
<dbReference type="PDB" id="8OH6">
    <property type="method" value="X-ray"/>
    <property type="resolution" value="3.35 A"/>
    <property type="chains" value="BL/y=1-186"/>
</dbReference>
<dbReference type="PDB" id="8OI5">
    <property type="method" value="X-ray"/>
    <property type="resolution" value="2.90 A"/>
    <property type="chains" value="BL/y=1-186"/>
</dbReference>
<dbReference type="PDB" id="8OJ3">
    <property type="method" value="X-ray"/>
    <property type="resolution" value="3.50 A"/>
    <property type="chains" value="BL/y=1-186"/>
</dbReference>
<dbReference type="PDBsum" id="7PZY"/>
<dbReference type="PDBsum" id="7Q08"/>
<dbReference type="PDBsum" id="7Q0F"/>
<dbReference type="PDBsum" id="7Q0P"/>
<dbReference type="PDBsum" id="7Q0R"/>
<dbReference type="PDBsum" id="8C3A"/>
<dbReference type="PDBsum" id="8OGJ"/>
<dbReference type="PDBsum" id="8OH6"/>
<dbReference type="PDBsum" id="8OI5"/>
<dbReference type="PDBsum" id="8OJ3"/>
<dbReference type="SMR" id="A0A1D8PK43"/>
<dbReference type="FunCoup" id="A0A1D8PK43">
    <property type="interactions" value="1027"/>
</dbReference>
<dbReference type="STRING" id="237561.A0A1D8PK43"/>
<dbReference type="EnsemblFungi" id="C3_05100C_A-T">
    <property type="protein sequence ID" value="C3_05100C_A-T-p1"/>
    <property type="gene ID" value="C3_05100C_A"/>
</dbReference>
<dbReference type="GeneID" id="3635156"/>
<dbReference type="KEGG" id="cal:CAALFM_C305100CA"/>
<dbReference type="CGD" id="CAL0000188970">
    <property type="gene designation" value="RPL18"/>
</dbReference>
<dbReference type="VEuPathDB" id="FungiDB:C3_05100C_A"/>
<dbReference type="eggNOG" id="KOG1714">
    <property type="taxonomic scope" value="Eukaryota"/>
</dbReference>
<dbReference type="InParanoid" id="A0A1D8PK43"/>
<dbReference type="OMA" id="IDICHKN"/>
<dbReference type="OrthoDB" id="6353017at2759"/>
<dbReference type="Proteomes" id="UP000000559">
    <property type="component" value="Chromosome 3"/>
</dbReference>
<dbReference type="GO" id="GO:0022625">
    <property type="term" value="C:cytosolic large ribosomal subunit"/>
    <property type="evidence" value="ECO:0000318"/>
    <property type="project" value="GO_Central"/>
</dbReference>
<dbReference type="GO" id="GO:0003723">
    <property type="term" value="F:RNA binding"/>
    <property type="evidence" value="ECO:0000318"/>
    <property type="project" value="GO_Central"/>
</dbReference>
<dbReference type="GO" id="GO:0003735">
    <property type="term" value="F:structural constituent of ribosome"/>
    <property type="evidence" value="ECO:0000318"/>
    <property type="project" value="GO_Central"/>
</dbReference>
<dbReference type="GO" id="GO:0006412">
    <property type="term" value="P:translation"/>
    <property type="evidence" value="ECO:0007669"/>
    <property type="project" value="InterPro"/>
</dbReference>
<dbReference type="FunFam" id="3.100.10.10:FF:000001">
    <property type="entry name" value="60S ribosomal protein L18"/>
    <property type="match status" value="1"/>
</dbReference>
<dbReference type="Gene3D" id="3.100.10.10">
    <property type="match status" value="1"/>
</dbReference>
<dbReference type="InterPro" id="IPR000039">
    <property type="entry name" value="Ribosomal_eL18"/>
</dbReference>
<dbReference type="InterPro" id="IPR021132">
    <property type="entry name" value="Ribosomal_eL18/eL18-A/B/_CS"/>
</dbReference>
<dbReference type="InterPro" id="IPR021131">
    <property type="entry name" value="Ribosomal_uL15/eL18"/>
</dbReference>
<dbReference type="InterPro" id="IPR036227">
    <property type="entry name" value="Ribosomal_uL15/eL18_sf"/>
</dbReference>
<dbReference type="PANTHER" id="PTHR10934">
    <property type="entry name" value="60S RIBOSOMAL PROTEIN L18"/>
    <property type="match status" value="1"/>
</dbReference>
<dbReference type="PANTHER" id="PTHR10934:SF2">
    <property type="entry name" value="LARGE RIBOSOMAL SUBUNIT PROTEIN EL18"/>
    <property type="match status" value="1"/>
</dbReference>
<dbReference type="Pfam" id="PF17135">
    <property type="entry name" value="Ribosomal_L18"/>
    <property type="match status" value="1"/>
</dbReference>
<dbReference type="SUPFAM" id="SSF52080">
    <property type="entry name" value="Ribosomal proteins L15p and L18e"/>
    <property type="match status" value="1"/>
</dbReference>
<dbReference type="PROSITE" id="PS01106">
    <property type="entry name" value="RIBOSOMAL_L18E"/>
    <property type="match status" value="1"/>
</dbReference>
<organism>
    <name type="scientific">Candida albicans (strain SC5314 / ATCC MYA-2876)</name>
    <name type="common">Yeast</name>
    <dbReference type="NCBI Taxonomy" id="237561"/>
    <lineage>
        <taxon>Eukaryota</taxon>
        <taxon>Fungi</taxon>
        <taxon>Dikarya</taxon>
        <taxon>Ascomycota</taxon>
        <taxon>Saccharomycotina</taxon>
        <taxon>Pichiomycetes</taxon>
        <taxon>Debaryomycetaceae</taxon>
        <taxon>Candida/Lodderomyces clade</taxon>
        <taxon>Candida</taxon>
    </lineage>
</organism>
<name>RL18_CANAL</name>
<evidence type="ECO:0000269" key="1">
    <source>
    </source>
</evidence>
<evidence type="ECO:0000303" key="2">
    <source>
    </source>
</evidence>
<evidence type="ECO:0000305" key="3"/>
<evidence type="ECO:0000305" key="4">
    <source>
    </source>
</evidence>
<evidence type="ECO:0007744" key="5">
    <source>
        <dbReference type="PDB" id="7PZY"/>
    </source>
</evidence>
<evidence type="ECO:0007744" key="6">
    <source>
        <dbReference type="PDB" id="7Q0F"/>
    </source>
</evidence>
<evidence type="ECO:0007744" key="7">
    <source>
        <dbReference type="PDB" id="7Q0P"/>
    </source>
</evidence>
<reference key="1">
    <citation type="journal article" date="2004" name="Proc. Natl. Acad. Sci. U.S.A.">
        <title>The diploid genome sequence of Candida albicans.</title>
        <authorList>
            <person name="Jones T."/>
            <person name="Federspiel N.A."/>
            <person name="Chibana H."/>
            <person name="Dungan J."/>
            <person name="Kalman S."/>
            <person name="Magee B.B."/>
            <person name="Newport G."/>
            <person name="Thorstenson Y.R."/>
            <person name="Agabian N."/>
            <person name="Magee P.T."/>
            <person name="Davis R.W."/>
            <person name="Scherer S."/>
        </authorList>
    </citation>
    <scope>NUCLEOTIDE SEQUENCE [LARGE SCALE GENOMIC DNA]</scope>
    <source>
        <strain>SC5314 / ATCC MYA-2876</strain>
    </source>
</reference>
<reference key="2">
    <citation type="journal article" date="2007" name="Genome Biol.">
        <title>Assembly of the Candida albicans genome into sixteen supercontigs aligned on the eight chromosomes.</title>
        <authorList>
            <person name="van het Hoog M."/>
            <person name="Rast T.J."/>
            <person name="Martchenko M."/>
            <person name="Grindle S."/>
            <person name="Dignard D."/>
            <person name="Hogues H."/>
            <person name="Cuomo C."/>
            <person name="Berriman M."/>
            <person name="Scherer S."/>
            <person name="Magee B.B."/>
            <person name="Whiteway M."/>
            <person name="Chibana H."/>
            <person name="Nantel A."/>
            <person name="Magee P.T."/>
        </authorList>
    </citation>
    <scope>GENOME REANNOTATION</scope>
    <source>
        <strain>SC5314 / ATCC MYA-2876</strain>
    </source>
</reference>
<reference key="3">
    <citation type="journal article" date="2013" name="Genome Biol.">
        <title>Assembly of a phased diploid Candida albicans genome facilitates allele-specific measurements and provides a simple model for repeat and indel structure.</title>
        <authorList>
            <person name="Muzzey D."/>
            <person name="Schwartz K."/>
            <person name="Weissman J.S."/>
            <person name="Sherlock G."/>
        </authorList>
    </citation>
    <scope>NUCLEOTIDE SEQUENCE [LARGE SCALE GENOMIC DNA]</scope>
    <scope>GENOME REANNOTATION</scope>
    <source>
        <strain>SC5314 / ATCC MYA-2876</strain>
    </source>
</reference>
<reference evidence="5 6 7" key="4">
    <citation type="journal article" date="2022" name="Sci. Adv.">
        <title>E-site drug specificity of the human pathogen Candida albicans ribosome.</title>
        <authorList>
            <person name="Zgadzay Y."/>
            <person name="Kolosova O."/>
            <person name="Stetsenko A."/>
            <person name="Wu C."/>
            <person name="Bruchlen D."/>
            <person name="Usachev K."/>
            <person name="Validov S."/>
            <person name="Jenner L."/>
            <person name="Rogachev A."/>
            <person name="Yusupova G."/>
            <person name="Sachs M.S."/>
            <person name="Guskov A."/>
            <person name="Yusupov M."/>
        </authorList>
    </citation>
    <scope>STRUCTURE BY ELECTRON MICROSCOPY (2.32 ANGSTROMS) OF THE 80S RIBOSOME</scope>
    <scope>SUBUNIT</scope>
</reference>
<accession>A0A1D8PK43</accession>
<gene>
    <name evidence="2" type="primary">RPL18</name>
    <name type="synonym">RPL18B</name>
    <name type="ordered locus">orf19.5982</name>
    <name type="ORF">CAALFM_C305100CA</name>
</gene>
<feature type="chain" id="PRO_0000456490" description="Large ribosomal subunit protein eL18">
    <location>
        <begin position="1"/>
        <end position="186"/>
    </location>
</feature>
<protein>
    <recommendedName>
        <fullName evidence="2">Large ribosomal subunit protein eL18</fullName>
    </recommendedName>
    <alternativeName>
        <fullName>60S ribosomal protein L18</fullName>
    </alternativeName>
</protein>
<sequence>MGRDHTSKQHVRSGHRTAPKSDNVYLQLLVKLYSFLARRTDAPFNKVILKSLFLSKINRPPVSVSRISRALKQKGAAEKTIVVVGTVTDDNRLLEFPKATIAALRFTAGAKDRILKNGGEAITLDQLALRAPKGQNTLIVRGPRNSREAVRHFGFGPHKGKAPRILSKGRKFERARGRRRSRGFKV</sequence>
<keyword id="KW-0002">3D-structure</keyword>
<keyword id="KW-0963">Cytoplasm</keyword>
<keyword id="KW-1185">Reference proteome</keyword>
<keyword id="KW-0687">Ribonucleoprotein</keyword>
<keyword id="KW-0689">Ribosomal protein</keyword>
<comment type="function">
    <text evidence="4">Component of the ribosome, a large ribonucleoprotein complex responsible for the synthesis of proteins in the cell. The small ribosomal subunit (SSU) binds messenger RNAs (mRNAs) and translates the encoded message by selecting cognate aminoacyl-transfer RNA (tRNA) molecules. The large subunit (LSU) contains the ribosomal catalytic site termed the peptidyl transferase center (PTC), which catalyzes the formation of peptide bonds, thereby polymerizing the amino acids delivered by tRNAs into a polypeptide chain. The nascent polypeptides leave the ribosome through a tunnel in the LSU and interact with protein factors that function in enzymatic processing, targeting, and the membrane insertion of nascent chains at the exit of the ribosomal tunnel.</text>
</comment>
<comment type="subunit">
    <text evidence="1">Component of the large ribosomal subunit (PubMed:35613268). Mature ribosomes consist of a small (40S) and a large (60S) subunit (PubMed:35613268). The 40S subunit contains about 32 different proteins and 1 molecule of RNA (18S) (PubMed:35613268). The 60S subunit contains 45 different proteins and 3 molecules of RNA (25S, 5.8S and 5S) (PubMed:35613268).</text>
</comment>
<comment type="subcellular location">
    <subcellularLocation>
        <location evidence="4">Cytoplasm</location>
    </subcellularLocation>
</comment>
<comment type="similarity">
    <text evidence="3">Belongs to the eukaryotic ribosomal protein eL18 family.</text>
</comment>